<proteinExistence type="inferred from homology"/>
<protein>
    <recommendedName>
        <fullName evidence="1">Probable glycine dehydrogenase (decarboxylating) subunit 2</fullName>
        <ecNumber evidence="1">1.4.4.2</ecNumber>
    </recommendedName>
    <alternativeName>
        <fullName evidence="1">Glycine cleavage system P-protein subunit 2</fullName>
    </alternativeName>
    <alternativeName>
        <fullName evidence="1">Glycine decarboxylase subunit 2</fullName>
    </alternativeName>
    <alternativeName>
        <fullName evidence="1">Glycine dehydrogenase (aminomethyl-transferring) subunit 2</fullName>
    </alternativeName>
</protein>
<gene>
    <name evidence="1" type="primary">gcvPB</name>
    <name type="ordered locus">MW1487</name>
</gene>
<evidence type="ECO:0000255" key="1">
    <source>
        <dbReference type="HAMAP-Rule" id="MF_00713"/>
    </source>
</evidence>
<sequence length="490" mass="54782">MTSKSSPLIFERSREGRYAYSLPKSDIKTNSVESLLDDKFIRKNKAEFPEVAELDLVRHYTELSNKNFGVDNGFYPLGSCTMKYNPKINEKVARIPGFSESHPLQDEDQVQGSLEIIYSLQEELKEITGMDEVTLQPAAGAHGEWTALMIFKAYHENNGEGHRDEVIVPDSAHGTNPASASFAGFKSVTVKSNERGEVDIDDLKRVVNENTAAIMLTNPNTLGIFEKNIMEIREIVHNAGGLLYYDGANLNAIMDKVRPGDMGFDAVHLNLHKTFTGPHGGGGPGSGPVGVVKELASYLPKPMVIKDGDKFKYDNDIKNSIGRVKPFYGNFGIYLRAYTYIRTMGATGLKEVSEAAVLNANYIKARLSKHFEIPYKQYCKHEFVLSGVRQKEFGVRTLDMAKRLLDFGVHPPTIYFPLNVEEGMMIEPTETESKETLDYFIDTLISIAEEAKNDPDKVLEAPHTTVIDRLDEATAARKPILKFENLKQEK</sequence>
<name>GCSPB_STAAW</name>
<comment type="function">
    <text evidence="1">The glycine cleavage system catalyzes the degradation of glycine. The P protein binds the alpha-amino group of glycine through its pyridoxal phosphate cofactor; CO(2) is released and the remaining methylamine moiety is then transferred to the lipoamide cofactor of the H protein.</text>
</comment>
<comment type="catalytic activity">
    <reaction evidence="1">
        <text>N(6)-[(R)-lipoyl]-L-lysyl-[glycine-cleavage complex H protein] + glycine + H(+) = N(6)-[(R)-S(8)-aminomethyldihydrolipoyl]-L-lysyl-[glycine-cleavage complex H protein] + CO2</text>
        <dbReference type="Rhea" id="RHEA:24304"/>
        <dbReference type="Rhea" id="RHEA-COMP:10494"/>
        <dbReference type="Rhea" id="RHEA-COMP:10495"/>
        <dbReference type="ChEBI" id="CHEBI:15378"/>
        <dbReference type="ChEBI" id="CHEBI:16526"/>
        <dbReference type="ChEBI" id="CHEBI:57305"/>
        <dbReference type="ChEBI" id="CHEBI:83099"/>
        <dbReference type="ChEBI" id="CHEBI:83143"/>
        <dbReference type="EC" id="1.4.4.2"/>
    </reaction>
</comment>
<comment type="cofactor">
    <cofactor evidence="1">
        <name>pyridoxal 5'-phosphate</name>
        <dbReference type="ChEBI" id="CHEBI:597326"/>
    </cofactor>
</comment>
<comment type="subunit">
    <text evidence="1">The glycine cleavage system is composed of four proteins: P, T, L and H. In this organism, the P 'protein' is a heterodimer of two subunits.</text>
</comment>
<comment type="similarity">
    <text evidence="1">Belongs to the GcvP family. C-terminal subunit subfamily.</text>
</comment>
<accession>Q8NWD0</accession>
<dbReference type="EC" id="1.4.4.2" evidence="1"/>
<dbReference type="EMBL" id="BA000033">
    <property type="protein sequence ID" value="BAB95352.1"/>
    <property type="molecule type" value="Genomic_DNA"/>
</dbReference>
<dbReference type="RefSeq" id="WP_000202189.1">
    <property type="nucleotide sequence ID" value="NC_003923.1"/>
</dbReference>
<dbReference type="SMR" id="Q8NWD0"/>
<dbReference type="KEGG" id="sam:MW1487"/>
<dbReference type="HOGENOM" id="CLU_004620_5_0_9"/>
<dbReference type="GO" id="GO:0005829">
    <property type="term" value="C:cytosol"/>
    <property type="evidence" value="ECO:0007669"/>
    <property type="project" value="TreeGrafter"/>
</dbReference>
<dbReference type="GO" id="GO:0005960">
    <property type="term" value="C:glycine cleavage complex"/>
    <property type="evidence" value="ECO:0007669"/>
    <property type="project" value="TreeGrafter"/>
</dbReference>
<dbReference type="GO" id="GO:0016594">
    <property type="term" value="F:glycine binding"/>
    <property type="evidence" value="ECO:0007669"/>
    <property type="project" value="TreeGrafter"/>
</dbReference>
<dbReference type="GO" id="GO:0004375">
    <property type="term" value="F:glycine dehydrogenase (decarboxylating) activity"/>
    <property type="evidence" value="ECO:0007669"/>
    <property type="project" value="UniProtKB-EC"/>
</dbReference>
<dbReference type="GO" id="GO:0030170">
    <property type="term" value="F:pyridoxal phosphate binding"/>
    <property type="evidence" value="ECO:0007669"/>
    <property type="project" value="TreeGrafter"/>
</dbReference>
<dbReference type="GO" id="GO:0019464">
    <property type="term" value="P:glycine decarboxylation via glycine cleavage system"/>
    <property type="evidence" value="ECO:0007669"/>
    <property type="project" value="UniProtKB-UniRule"/>
</dbReference>
<dbReference type="CDD" id="cd00613">
    <property type="entry name" value="GDC-P"/>
    <property type="match status" value="1"/>
</dbReference>
<dbReference type="FunFam" id="3.40.640.10:FF:000034">
    <property type="entry name" value="Probable glycine dehydrogenase (decarboxylating) subunit 2"/>
    <property type="match status" value="1"/>
</dbReference>
<dbReference type="FunFam" id="3.90.1150.10:FF:000014">
    <property type="entry name" value="Probable glycine dehydrogenase (decarboxylating) subunit 2"/>
    <property type="match status" value="1"/>
</dbReference>
<dbReference type="Gene3D" id="6.20.440.10">
    <property type="match status" value="1"/>
</dbReference>
<dbReference type="Gene3D" id="3.90.1150.10">
    <property type="entry name" value="Aspartate Aminotransferase, domain 1"/>
    <property type="match status" value="1"/>
</dbReference>
<dbReference type="Gene3D" id="3.40.640.10">
    <property type="entry name" value="Type I PLP-dependent aspartate aminotransferase-like (Major domain)"/>
    <property type="match status" value="1"/>
</dbReference>
<dbReference type="HAMAP" id="MF_00713">
    <property type="entry name" value="GcvPB"/>
    <property type="match status" value="1"/>
</dbReference>
<dbReference type="InterPro" id="IPR000192">
    <property type="entry name" value="Aminotrans_V_dom"/>
</dbReference>
<dbReference type="InterPro" id="IPR023012">
    <property type="entry name" value="GcvPB"/>
</dbReference>
<dbReference type="InterPro" id="IPR049316">
    <property type="entry name" value="GDC-P_C"/>
</dbReference>
<dbReference type="InterPro" id="IPR020581">
    <property type="entry name" value="GDC_P"/>
</dbReference>
<dbReference type="InterPro" id="IPR015424">
    <property type="entry name" value="PyrdxlP-dep_Trfase"/>
</dbReference>
<dbReference type="InterPro" id="IPR015421">
    <property type="entry name" value="PyrdxlP-dep_Trfase_major"/>
</dbReference>
<dbReference type="InterPro" id="IPR015422">
    <property type="entry name" value="PyrdxlP-dep_Trfase_small"/>
</dbReference>
<dbReference type="NCBIfam" id="NF003346">
    <property type="entry name" value="PRK04366.1"/>
    <property type="match status" value="1"/>
</dbReference>
<dbReference type="PANTHER" id="PTHR11773:SF1">
    <property type="entry name" value="GLYCINE DEHYDROGENASE (DECARBOXYLATING), MITOCHONDRIAL"/>
    <property type="match status" value="1"/>
</dbReference>
<dbReference type="PANTHER" id="PTHR11773">
    <property type="entry name" value="GLYCINE DEHYDROGENASE, DECARBOXYLATING"/>
    <property type="match status" value="1"/>
</dbReference>
<dbReference type="Pfam" id="PF00266">
    <property type="entry name" value="Aminotran_5"/>
    <property type="match status" value="1"/>
</dbReference>
<dbReference type="Pfam" id="PF21478">
    <property type="entry name" value="GcvP2_C"/>
    <property type="match status" value="1"/>
</dbReference>
<dbReference type="SUPFAM" id="SSF53383">
    <property type="entry name" value="PLP-dependent transferases"/>
    <property type="match status" value="1"/>
</dbReference>
<keyword id="KW-0560">Oxidoreductase</keyword>
<keyword id="KW-0663">Pyridoxal phosphate</keyword>
<reference key="1">
    <citation type="journal article" date="2002" name="Lancet">
        <title>Genome and virulence determinants of high virulence community-acquired MRSA.</title>
        <authorList>
            <person name="Baba T."/>
            <person name="Takeuchi F."/>
            <person name="Kuroda M."/>
            <person name="Yuzawa H."/>
            <person name="Aoki K."/>
            <person name="Oguchi A."/>
            <person name="Nagai Y."/>
            <person name="Iwama N."/>
            <person name="Asano K."/>
            <person name="Naimi T."/>
            <person name="Kuroda H."/>
            <person name="Cui L."/>
            <person name="Yamamoto K."/>
            <person name="Hiramatsu K."/>
        </authorList>
    </citation>
    <scope>NUCLEOTIDE SEQUENCE [LARGE SCALE GENOMIC DNA]</scope>
    <source>
        <strain>MW2</strain>
    </source>
</reference>
<feature type="chain" id="PRO_0000167016" description="Probable glycine dehydrogenase (decarboxylating) subunit 2">
    <location>
        <begin position="1"/>
        <end position="490"/>
    </location>
</feature>
<feature type="modified residue" description="N6-(pyridoxal phosphate)lysine" evidence="1">
    <location>
        <position position="273"/>
    </location>
</feature>
<organism>
    <name type="scientific">Staphylococcus aureus (strain MW2)</name>
    <dbReference type="NCBI Taxonomy" id="196620"/>
    <lineage>
        <taxon>Bacteria</taxon>
        <taxon>Bacillati</taxon>
        <taxon>Bacillota</taxon>
        <taxon>Bacilli</taxon>
        <taxon>Bacillales</taxon>
        <taxon>Staphylococcaceae</taxon>
        <taxon>Staphylococcus</taxon>
    </lineage>
</organism>